<organism>
    <name type="scientific">Dickeya dadantii (strain 3937)</name>
    <name type="common">Erwinia chrysanthemi (strain 3937)</name>
    <dbReference type="NCBI Taxonomy" id="198628"/>
    <lineage>
        <taxon>Bacteria</taxon>
        <taxon>Pseudomonadati</taxon>
        <taxon>Pseudomonadota</taxon>
        <taxon>Gammaproteobacteria</taxon>
        <taxon>Enterobacterales</taxon>
        <taxon>Pectobacteriaceae</taxon>
        <taxon>Dickeya</taxon>
    </lineage>
</organism>
<protein>
    <recommendedName>
        <fullName>Pectate lyase E</fullName>
        <ecNumber>4.2.2.2</ecNumber>
    </recommendedName>
</protein>
<proteinExistence type="inferred from homology"/>
<feature type="signal peptide" evidence="1">
    <location>
        <begin position="1"/>
        <end position="41"/>
    </location>
</feature>
<feature type="chain" id="PRO_0000233031" description="Pectate lyase E">
    <location>
        <begin position="42"/>
        <end position="404"/>
    </location>
</feature>
<feature type="active site" evidence="2">
    <location>
        <position position="278"/>
    </location>
</feature>
<feature type="binding site" evidence="1">
    <location>
        <position position="182"/>
    </location>
    <ligand>
        <name>Ca(2+)</name>
        <dbReference type="ChEBI" id="CHEBI:29108"/>
    </ligand>
</feature>
<feature type="binding site" evidence="1">
    <location>
        <position position="225"/>
    </location>
    <ligand>
        <name>Ca(2+)</name>
        <dbReference type="ChEBI" id="CHEBI:29108"/>
    </ligand>
</feature>
<feature type="sequence conflict" description="In Ref. 1; AAA24854." evidence="3" ref="1">
    <original>S</original>
    <variation>D</variation>
    <location>
        <position position="114"/>
    </location>
</feature>
<reference key="1">
    <citation type="journal article" date="1989" name="Gene">
        <title>Nucleotide sequences of the Erwinia chrysanthemi ogl and pelE genes negatively regulated by the kdgR gene product.</title>
        <authorList>
            <person name="Reverchon S."/>
            <person name="Huang Y."/>
            <person name="Bourson C."/>
            <person name="Robert-Baudouy J."/>
        </authorList>
    </citation>
    <scope>NUCLEOTIDE SEQUENCE [GENOMIC DNA]</scope>
    <source>
        <strain>3937</strain>
    </source>
</reference>
<reference key="2">
    <citation type="journal article" date="2011" name="J. Bacteriol.">
        <title>Genome sequence of the plant-pathogenic bacterium Dickeya dadantii 3937.</title>
        <authorList>
            <person name="Glasner J.D."/>
            <person name="Yang C.H."/>
            <person name="Reverchon S."/>
            <person name="Hugouvieux-Cotte-Pattat N."/>
            <person name="Condemine G."/>
            <person name="Bohin J.P."/>
            <person name="Van Gijsegem F."/>
            <person name="Yang S."/>
            <person name="Franza T."/>
            <person name="Expert D."/>
            <person name="Plunkett G. III"/>
            <person name="San Francisco M.J."/>
            <person name="Charkowski A.O."/>
            <person name="Py B."/>
            <person name="Bell K."/>
            <person name="Rauscher L."/>
            <person name="Rodriguez-Palenzuela P."/>
            <person name="Toussaint A."/>
            <person name="Holeva M.C."/>
            <person name="He S.Y."/>
            <person name="Douet V."/>
            <person name="Boccara M."/>
            <person name="Blanco C."/>
            <person name="Toth I."/>
            <person name="Anderson B.D."/>
            <person name="Biehl B.S."/>
            <person name="Mau B."/>
            <person name="Flynn S.M."/>
            <person name="Barras F."/>
            <person name="Lindeberg M."/>
            <person name="Birch P.R."/>
            <person name="Tsuyumu S."/>
            <person name="Shi X."/>
            <person name="Hibbing M."/>
            <person name="Yap M.N."/>
            <person name="Carpentier M."/>
            <person name="Dassa E."/>
            <person name="Umehara M."/>
            <person name="Kim J.F."/>
            <person name="Rusch M."/>
            <person name="Soni P."/>
            <person name="Mayhew G.F."/>
            <person name="Fouts D.E."/>
            <person name="Gill S.R."/>
            <person name="Blattner F.R."/>
            <person name="Keen N.T."/>
            <person name="Perna N.T."/>
        </authorList>
    </citation>
    <scope>NUCLEOTIDE SEQUENCE [LARGE SCALE GENOMIC DNA]</scope>
    <source>
        <strain>3937</strain>
    </source>
</reference>
<name>PLYE_DICD3</name>
<dbReference type="EC" id="4.2.2.2"/>
<dbReference type="EMBL" id="M33584">
    <property type="protein sequence ID" value="AAA24854.1"/>
    <property type="molecule type" value="Genomic_DNA"/>
</dbReference>
<dbReference type="EMBL" id="CP002038">
    <property type="protein sequence ID" value="ADM99551.1"/>
    <property type="molecule type" value="Genomic_DNA"/>
</dbReference>
<dbReference type="PIR" id="JQ0190">
    <property type="entry name" value="WZWCPE"/>
</dbReference>
<dbReference type="RefSeq" id="WP_013318982.1">
    <property type="nucleotide sequence ID" value="NC_014500.1"/>
</dbReference>
<dbReference type="SMR" id="P0C1A5"/>
<dbReference type="STRING" id="198628.Dda3937_03371"/>
<dbReference type="CAZy" id="PL1">
    <property type="family name" value="Polysaccharide Lyase Family 1"/>
</dbReference>
<dbReference type="KEGG" id="ddd:Dda3937_03371"/>
<dbReference type="PATRIC" id="fig|198628.6.peg.3309"/>
<dbReference type="eggNOG" id="COG3866">
    <property type="taxonomic scope" value="Bacteria"/>
</dbReference>
<dbReference type="HOGENOM" id="CLU_021894_3_0_6"/>
<dbReference type="OrthoDB" id="5592990at2"/>
<dbReference type="BioCyc" id="MetaCyc:MONOMER-15660"/>
<dbReference type="UniPathway" id="UPA00545">
    <property type="reaction ID" value="UER00824"/>
</dbReference>
<dbReference type="PHI-base" id="PHI:6855"/>
<dbReference type="Proteomes" id="UP000006859">
    <property type="component" value="Chromosome"/>
</dbReference>
<dbReference type="GO" id="GO:0005576">
    <property type="term" value="C:extracellular region"/>
    <property type="evidence" value="ECO:0007669"/>
    <property type="project" value="UniProtKB-SubCell"/>
</dbReference>
<dbReference type="GO" id="GO:0046872">
    <property type="term" value="F:metal ion binding"/>
    <property type="evidence" value="ECO:0007669"/>
    <property type="project" value="UniProtKB-KW"/>
</dbReference>
<dbReference type="GO" id="GO:0030570">
    <property type="term" value="F:pectate lyase activity"/>
    <property type="evidence" value="ECO:0007669"/>
    <property type="project" value="UniProtKB-EC"/>
</dbReference>
<dbReference type="GO" id="GO:0045490">
    <property type="term" value="P:pectin catabolic process"/>
    <property type="evidence" value="ECO:0007669"/>
    <property type="project" value="UniProtKB-UniPathway"/>
</dbReference>
<dbReference type="Gene3D" id="2.160.20.10">
    <property type="entry name" value="Single-stranded right-handed beta-helix, Pectin lyase-like"/>
    <property type="match status" value="1"/>
</dbReference>
<dbReference type="InterPro" id="IPR002022">
    <property type="entry name" value="Pec_lyase"/>
</dbReference>
<dbReference type="InterPro" id="IPR012334">
    <property type="entry name" value="Pectin_lyas_fold"/>
</dbReference>
<dbReference type="InterPro" id="IPR011050">
    <property type="entry name" value="Pectin_lyase_fold/virulence"/>
</dbReference>
<dbReference type="InterPro" id="IPR045032">
    <property type="entry name" value="PEL"/>
</dbReference>
<dbReference type="PANTHER" id="PTHR31683">
    <property type="entry name" value="PECTATE LYASE 18-RELATED"/>
    <property type="match status" value="1"/>
</dbReference>
<dbReference type="PANTHER" id="PTHR31683:SF18">
    <property type="entry name" value="PECTATE LYASE 21-RELATED"/>
    <property type="match status" value="1"/>
</dbReference>
<dbReference type="Pfam" id="PF00544">
    <property type="entry name" value="Pectate_lyase_4"/>
    <property type="match status" value="1"/>
</dbReference>
<dbReference type="SMART" id="SM00656">
    <property type="entry name" value="Amb_all"/>
    <property type="match status" value="1"/>
</dbReference>
<dbReference type="SUPFAM" id="SSF51126">
    <property type="entry name" value="Pectin lyase-like"/>
    <property type="match status" value="1"/>
</dbReference>
<sequence>MNNSRMSSVSTQKTTGRSALGTKSALAAIIATTMMVSVASAASLQTTKATEAASTGWATQSGGTTGGAKASSSKIYAVKSISEFKAALNGTDSSPKIIQVTGAIDISGGKAYTSFDDQKARSQISIPSNTTIIGIGNKGKFTNGSLVVKGVSNVILRNLYIETPVDVAPHYEEGDGWNAEWDAVVIDSTDHVWVDHVTISDGSLTDDKYTTKNGEKYVQHDGSLDIKRGSDYVTVSNSRFELHDKTILIGHSDNNGSQDAGKLRVTFHNNLFDRVGERTPRVRFGSVHAYNNVYVGDVNHKAYRYQYSFGIGTSGSLLSESNAFTIDNMKKISGRDKECSVVKAFNGKIFSDKGSIINGASYNLNGCGFGFSAYSAKIPYKYSAQTITTSLANSISSNAGYGKL</sequence>
<keyword id="KW-0106">Calcium</keyword>
<keyword id="KW-0456">Lyase</keyword>
<keyword id="KW-0479">Metal-binding</keyword>
<keyword id="KW-1185">Reference proteome</keyword>
<keyword id="KW-0964">Secreted</keyword>
<keyword id="KW-0732">Signal</keyword>
<evidence type="ECO:0000250" key="1"/>
<evidence type="ECO:0000255" key="2"/>
<evidence type="ECO:0000305" key="3"/>
<gene>
    <name type="primary">pelE</name>
    <name type="ordered locus">Dda3937_03371</name>
</gene>
<accession>P0C1A5</accession>
<accession>E0SAZ2</accession>
<accession>P18210</accession>
<comment type="function">
    <text>Involved in maceration and soft-rotting of plant tissue. Pectate lyases have been implicated as pathogenicity factors which induce maceration or rotting of plant tissue. PelE is sufficient to induce these effects under laboratory conditions.</text>
</comment>
<comment type="catalytic activity">
    <reaction>
        <text>Eliminative cleavage of (1-&gt;4)-alpha-D-galacturonan to give oligosaccharides with 4-deoxy-alpha-D-galact-4-enuronosyl groups at their non-reducing ends.</text>
        <dbReference type="EC" id="4.2.2.2"/>
    </reaction>
</comment>
<comment type="cofactor">
    <cofactor evidence="1">
        <name>Ca(2+)</name>
        <dbReference type="ChEBI" id="CHEBI:29108"/>
    </cofactor>
    <text evidence="1">Binds 1 Ca(2+) ion per subunit.</text>
</comment>
<comment type="pathway">
    <text>Glycan metabolism; pectin degradation; 2-dehydro-3-deoxy-D-gluconate from pectin: step 2/5.</text>
</comment>
<comment type="subcellular location">
    <subcellularLocation>
        <location>Secreted</location>
    </subcellularLocation>
</comment>
<comment type="similarity">
    <text evidence="3">Belongs to the polysaccharide lyase 1 family. PLBC subfamily.</text>
</comment>